<reference key="1">
    <citation type="journal article" date="2002" name="Nucleic Acids Res.">
        <title>Genome sequence of Shigella flexneri 2a: insights into pathogenicity through comparison with genomes of Escherichia coli K12 and O157.</title>
        <authorList>
            <person name="Jin Q."/>
            <person name="Yuan Z."/>
            <person name="Xu J."/>
            <person name="Wang Y."/>
            <person name="Shen Y."/>
            <person name="Lu W."/>
            <person name="Wang J."/>
            <person name="Liu H."/>
            <person name="Yang J."/>
            <person name="Yang F."/>
            <person name="Zhang X."/>
            <person name="Zhang J."/>
            <person name="Yang G."/>
            <person name="Wu H."/>
            <person name="Qu D."/>
            <person name="Dong J."/>
            <person name="Sun L."/>
            <person name="Xue Y."/>
            <person name="Zhao A."/>
            <person name="Gao Y."/>
            <person name="Zhu J."/>
            <person name="Kan B."/>
            <person name="Ding K."/>
            <person name="Chen S."/>
            <person name="Cheng H."/>
            <person name="Yao Z."/>
            <person name="He B."/>
            <person name="Chen R."/>
            <person name="Ma D."/>
            <person name="Qiang B."/>
            <person name="Wen Y."/>
            <person name="Hou Y."/>
            <person name="Yu J."/>
        </authorList>
    </citation>
    <scope>NUCLEOTIDE SEQUENCE [LARGE SCALE GENOMIC DNA]</scope>
    <source>
        <strain>301 / Serotype 2a</strain>
    </source>
</reference>
<reference key="2">
    <citation type="journal article" date="2003" name="Infect. Immun.">
        <title>Complete genome sequence and comparative genomics of Shigella flexneri serotype 2a strain 2457T.</title>
        <authorList>
            <person name="Wei J."/>
            <person name="Goldberg M.B."/>
            <person name="Burland V."/>
            <person name="Venkatesan M.M."/>
            <person name="Deng W."/>
            <person name="Fournier G."/>
            <person name="Mayhew G.F."/>
            <person name="Plunkett G. III"/>
            <person name="Rose D.J."/>
            <person name="Darling A."/>
            <person name="Mau B."/>
            <person name="Perna N.T."/>
            <person name="Payne S.M."/>
            <person name="Runyen-Janecky L.J."/>
            <person name="Zhou S."/>
            <person name="Schwartz D.C."/>
            <person name="Blattner F.R."/>
        </authorList>
    </citation>
    <scope>NUCLEOTIDE SEQUENCE [LARGE SCALE GENOMIC DNA]</scope>
    <source>
        <strain>ATCC 700930 / 2457T / Serotype 2a</strain>
    </source>
</reference>
<name>FADR_SHIFL</name>
<organism>
    <name type="scientific">Shigella flexneri</name>
    <dbReference type="NCBI Taxonomy" id="623"/>
    <lineage>
        <taxon>Bacteria</taxon>
        <taxon>Pseudomonadati</taxon>
        <taxon>Pseudomonadota</taxon>
        <taxon>Gammaproteobacteria</taxon>
        <taxon>Enterobacterales</taxon>
        <taxon>Enterobacteriaceae</taxon>
        <taxon>Shigella</taxon>
    </lineage>
</organism>
<gene>
    <name evidence="2" type="primary">fadR</name>
    <name type="ordered locus">SF1176</name>
    <name type="ordered locus">S1264</name>
</gene>
<accession>P0A8V9</accession>
<accession>P09371</accession>
<accession>P76827</accession>
<sequence>MVIKAQSPAGFAEEYIIESIWNNRFPPGTILPAERELSELIGVTRTTLREVLQRLARDGWLTIQHGKPTKVNNFWETSGLNILETLARLDHESVPQLIDNLLSVRTNISTIFIRTAFRQHPDKAQEVLATANEVADHADAFAELDYNIFRGLAFASGNPIYGLILNGMKGLYTRIGRHYFANPEARSLALGFYHKLSALCSEGAHDQVYETVRRYGHESGEIWHRMQKNLPGDLAIQGR</sequence>
<feature type="initiator methionine" description="Removed" evidence="1">
    <location>
        <position position="1"/>
    </location>
</feature>
<feature type="chain" id="PRO_0000050635" description="Fatty acid metabolism regulator protein">
    <location>
        <begin position="2"/>
        <end position="239"/>
    </location>
</feature>
<feature type="domain" description="HTH gntR-type" evidence="2">
    <location>
        <begin position="6"/>
        <end position="74"/>
    </location>
</feature>
<feature type="DNA-binding region" description="H-T-H motif" evidence="2">
    <location>
        <begin position="34"/>
        <end position="53"/>
    </location>
</feature>
<dbReference type="EMBL" id="AE005674">
    <property type="protein sequence ID" value="AAN42791.2"/>
    <property type="molecule type" value="Genomic_DNA"/>
</dbReference>
<dbReference type="EMBL" id="AE014073">
    <property type="protein sequence ID" value="AAP16682.1"/>
    <property type="molecule type" value="Genomic_DNA"/>
</dbReference>
<dbReference type="RefSeq" id="NP_707084.2">
    <property type="nucleotide sequence ID" value="NC_004337.2"/>
</dbReference>
<dbReference type="RefSeq" id="WP_000234823.1">
    <property type="nucleotide sequence ID" value="NZ_WPGW01000047.1"/>
</dbReference>
<dbReference type="SMR" id="P0A8V9"/>
<dbReference type="STRING" id="198214.SF1176"/>
<dbReference type="DrugBank" id="DB01992">
    <property type="generic name" value="Coenzyme A"/>
</dbReference>
<dbReference type="PaxDb" id="198214-SF1176"/>
<dbReference type="GeneID" id="1024109"/>
<dbReference type="GeneID" id="93776245"/>
<dbReference type="KEGG" id="sfl:SF1176"/>
<dbReference type="KEGG" id="sfx:S1264"/>
<dbReference type="PATRIC" id="fig|198214.7.peg.1390"/>
<dbReference type="HOGENOM" id="CLU_017584_9_4_6"/>
<dbReference type="Proteomes" id="UP000001006">
    <property type="component" value="Chromosome"/>
</dbReference>
<dbReference type="Proteomes" id="UP000002673">
    <property type="component" value="Chromosome"/>
</dbReference>
<dbReference type="GO" id="GO:0005737">
    <property type="term" value="C:cytoplasm"/>
    <property type="evidence" value="ECO:0007669"/>
    <property type="project" value="UniProtKB-SubCell"/>
</dbReference>
<dbReference type="GO" id="GO:0003677">
    <property type="term" value="F:DNA binding"/>
    <property type="evidence" value="ECO:0007669"/>
    <property type="project" value="UniProtKB-KW"/>
</dbReference>
<dbReference type="GO" id="GO:0003700">
    <property type="term" value="F:DNA-binding transcription factor activity"/>
    <property type="evidence" value="ECO:0007669"/>
    <property type="project" value="UniProtKB-UniRule"/>
</dbReference>
<dbReference type="GO" id="GO:0000062">
    <property type="term" value="F:fatty-acyl-CoA binding"/>
    <property type="evidence" value="ECO:0007669"/>
    <property type="project" value="InterPro"/>
</dbReference>
<dbReference type="GO" id="GO:0006631">
    <property type="term" value="P:fatty acid metabolic process"/>
    <property type="evidence" value="ECO:0007669"/>
    <property type="project" value="UniProtKB-KW"/>
</dbReference>
<dbReference type="GO" id="GO:0019217">
    <property type="term" value="P:regulation of fatty acid metabolic process"/>
    <property type="evidence" value="ECO:0007669"/>
    <property type="project" value="UniProtKB-UniRule"/>
</dbReference>
<dbReference type="CDD" id="cd07377">
    <property type="entry name" value="WHTH_GntR"/>
    <property type="match status" value="1"/>
</dbReference>
<dbReference type="FunFam" id="1.10.10.10:FF:000036">
    <property type="entry name" value="Fatty acid metabolism regulator protein"/>
    <property type="match status" value="1"/>
</dbReference>
<dbReference type="FunFam" id="1.20.120.530:FF:000003">
    <property type="entry name" value="Fatty acid metabolism regulator protein"/>
    <property type="match status" value="1"/>
</dbReference>
<dbReference type="Gene3D" id="1.20.120.530">
    <property type="entry name" value="GntR ligand-binding domain-like"/>
    <property type="match status" value="1"/>
</dbReference>
<dbReference type="Gene3D" id="1.10.10.10">
    <property type="entry name" value="Winged helix-like DNA-binding domain superfamily/Winged helix DNA-binding domain"/>
    <property type="match status" value="1"/>
</dbReference>
<dbReference type="HAMAP" id="MF_00696">
    <property type="entry name" value="HTH_FadR"/>
    <property type="match status" value="1"/>
</dbReference>
<dbReference type="InterPro" id="IPR014178">
    <property type="entry name" value="FA-response_TF_FadR"/>
</dbReference>
<dbReference type="InterPro" id="IPR028374">
    <property type="entry name" value="FadR_C"/>
</dbReference>
<dbReference type="InterPro" id="IPR008920">
    <property type="entry name" value="TF_FadR/GntR_C"/>
</dbReference>
<dbReference type="InterPro" id="IPR000524">
    <property type="entry name" value="Tscrpt_reg_HTH_GntR"/>
</dbReference>
<dbReference type="InterPro" id="IPR036388">
    <property type="entry name" value="WH-like_DNA-bd_sf"/>
</dbReference>
<dbReference type="InterPro" id="IPR036390">
    <property type="entry name" value="WH_DNA-bd_sf"/>
</dbReference>
<dbReference type="NCBIfam" id="TIGR02812">
    <property type="entry name" value="fadR_gamma"/>
    <property type="match status" value="1"/>
</dbReference>
<dbReference type="NCBIfam" id="NF003444">
    <property type="entry name" value="PRK04984.1"/>
    <property type="match status" value="1"/>
</dbReference>
<dbReference type="PANTHER" id="PTHR43537:SF52">
    <property type="entry name" value="FATTY ACID METABOLISM REGULATOR PROTEIN"/>
    <property type="match status" value="1"/>
</dbReference>
<dbReference type="PANTHER" id="PTHR43537">
    <property type="entry name" value="TRANSCRIPTIONAL REGULATOR, GNTR FAMILY"/>
    <property type="match status" value="1"/>
</dbReference>
<dbReference type="Pfam" id="PF07840">
    <property type="entry name" value="FadR_C"/>
    <property type="match status" value="1"/>
</dbReference>
<dbReference type="Pfam" id="PF00392">
    <property type="entry name" value="GntR"/>
    <property type="match status" value="1"/>
</dbReference>
<dbReference type="PRINTS" id="PR00035">
    <property type="entry name" value="HTHGNTR"/>
</dbReference>
<dbReference type="SMART" id="SM00345">
    <property type="entry name" value="HTH_GNTR"/>
    <property type="match status" value="1"/>
</dbReference>
<dbReference type="SUPFAM" id="SSF48008">
    <property type="entry name" value="GntR ligand-binding domain-like"/>
    <property type="match status" value="1"/>
</dbReference>
<dbReference type="SUPFAM" id="SSF46785">
    <property type="entry name" value="Winged helix' DNA-binding domain"/>
    <property type="match status" value="1"/>
</dbReference>
<dbReference type="PROSITE" id="PS50949">
    <property type="entry name" value="HTH_GNTR"/>
    <property type="match status" value="1"/>
</dbReference>
<comment type="function">
    <text evidence="2">Multifunctional regulator of fatty acid metabolism.</text>
</comment>
<comment type="subunit">
    <text evidence="2">Homodimer.</text>
</comment>
<comment type="subcellular location">
    <subcellularLocation>
        <location evidence="2">Cytoplasm</location>
    </subcellularLocation>
</comment>
<proteinExistence type="inferred from homology"/>
<keyword id="KW-0010">Activator</keyword>
<keyword id="KW-0963">Cytoplasm</keyword>
<keyword id="KW-0238">DNA-binding</keyword>
<keyword id="KW-0276">Fatty acid metabolism</keyword>
<keyword id="KW-0443">Lipid metabolism</keyword>
<keyword id="KW-1185">Reference proteome</keyword>
<keyword id="KW-0678">Repressor</keyword>
<keyword id="KW-0804">Transcription</keyword>
<keyword id="KW-0805">Transcription regulation</keyword>
<protein>
    <recommendedName>
        <fullName evidence="2">Fatty acid metabolism regulator protein</fullName>
    </recommendedName>
</protein>
<evidence type="ECO:0000250" key="1"/>
<evidence type="ECO:0000255" key="2">
    <source>
        <dbReference type="HAMAP-Rule" id="MF_00696"/>
    </source>
</evidence>